<protein>
    <recommendedName>
        <fullName>Homeobox protein abdominal-A homolog</fullName>
    </recommendedName>
</protein>
<dbReference type="EMBL" id="AF080566">
    <property type="protein sequence ID" value="AAC31946.1"/>
    <property type="molecule type" value="mRNA"/>
</dbReference>
<dbReference type="EMBL" id="AAAB01008850">
    <property type="protein sequence ID" value="EAA07261.6"/>
    <property type="molecule type" value="Genomic_DNA"/>
</dbReference>
<dbReference type="RefSeq" id="XP_311627.4">
    <property type="nucleotide sequence ID" value="XM_311627.4"/>
</dbReference>
<dbReference type="SMR" id="O76762"/>
<dbReference type="STRING" id="7165.O76762"/>
<dbReference type="PaxDb" id="7165-AGAP004662-PB"/>
<dbReference type="EnsemblMetazoa" id="AGAP004662-RA">
    <property type="protein sequence ID" value="AGAP004662-PA"/>
    <property type="gene ID" value="AGAP004662"/>
</dbReference>
<dbReference type="VEuPathDB" id="VectorBase:AGAMI1_012085"/>
<dbReference type="VEuPathDB" id="VectorBase:AGAP004662"/>
<dbReference type="eggNOG" id="KOG0489">
    <property type="taxonomic scope" value="Eukaryota"/>
</dbReference>
<dbReference type="HOGENOM" id="CLU_748459_0_0_1"/>
<dbReference type="InParanoid" id="O76762"/>
<dbReference type="Proteomes" id="UP000007062">
    <property type="component" value="Chromosome 2R"/>
</dbReference>
<dbReference type="GO" id="GO:0005634">
    <property type="term" value="C:nucleus"/>
    <property type="evidence" value="ECO:0000318"/>
    <property type="project" value="GO_Central"/>
</dbReference>
<dbReference type="GO" id="GO:0003700">
    <property type="term" value="F:DNA-binding transcription factor activity"/>
    <property type="evidence" value="ECO:0000250"/>
    <property type="project" value="UniProtKB"/>
</dbReference>
<dbReference type="GO" id="GO:0000981">
    <property type="term" value="F:DNA-binding transcription factor activity, RNA polymerase II-specific"/>
    <property type="evidence" value="ECO:0000318"/>
    <property type="project" value="GO_Central"/>
</dbReference>
<dbReference type="GO" id="GO:0000978">
    <property type="term" value="F:RNA polymerase II cis-regulatory region sequence-specific DNA binding"/>
    <property type="evidence" value="ECO:0000318"/>
    <property type="project" value="GO_Central"/>
</dbReference>
<dbReference type="GO" id="GO:0009952">
    <property type="term" value="P:anterior/posterior pattern specification"/>
    <property type="evidence" value="ECO:0000250"/>
    <property type="project" value="UniProtKB"/>
</dbReference>
<dbReference type="GO" id="GO:0000122">
    <property type="term" value="P:negative regulation of transcription by RNA polymerase II"/>
    <property type="evidence" value="ECO:0000318"/>
    <property type="project" value="GO_Central"/>
</dbReference>
<dbReference type="GO" id="GO:0006355">
    <property type="term" value="P:regulation of DNA-templated transcription"/>
    <property type="evidence" value="ECO:0000250"/>
    <property type="project" value="UniProtKB"/>
</dbReference>
<dbReference type="CDD" id="cd00086">
    <property type="entry name" value="homeodomain"/>
    <property type="match status" value="1"/>
</dbReference>
<dbReference type="FunFam" id="1.10.10.60:FF:000317">
    <property type="entry name" value="homeobox protein abdominal-A"/>
    <property type="match status" value="1"/>
</dbReference>
<dbReference type="Gene3D" id="1.10.10.60">
    <property type="entry name" value="Homeodomain-like"/>
    <property type="match status" value="1"/>
</dbReference>
<dbReference type="InterPro" id="IPR022132">
    <property type="entry name" value="Abdominal-A"/>
</dbReference>
<dbReference type="InterPro" id="IPR050296">
    <property type="entry name" value="Antp_homeobox"/>
</dbReference>
<dbReference type="InterPro" id="IPR001356">
    <property type="entry name" value="HD"/>
</dbReference>
<dbReference type="InterPro" id="IPR020479">
    <property type="entry name" value="HD_metazoa"/>
</dbReference>
<dbReference type="InterPro" id="IPR017970">
    <property type="entry name" value="Homeobox_CS"/>
</dbReference>
<dbReference type="InterPro" id="IPR009057">
    <property type="entry name" value="Homeodomain-like_sf"/>
</dbReference>
<dbReference type="PANTHER" id="PTHR45659:SF4">
    <property type="entry name" value="HOMEOBOX PROTEIN ABDOMINAL-A"/>
    <property type="match status" value="1"/>
</dbReference>
<dbReference type="PANTHER" id="PTHR45659">
    <property type="entry name" value="HOMEOBOX PROTEIN HOX"/>
    <property type="match status" value="1"/>
</dbReference>
<dbReference type="Pfam" id="PF12407">
    <property type="entry name" value="Abdominal-A"/>
    <property type="match status" value="1"/>
</dbReference>
<dbReference type="Pfam" id="PF00046">
    <property type="entry name" value="Homeodomain"/>
    <property type="match status" value="1"/>
</dbReference>
<dbReference type="PRINTS" id="PR00024">
    <property type="entry name" value="HOMEOBOX"/>
</dbReference>
<dbReference type="SMART" id="SM00389">
    <property type="entry name" value="HOX"/>
    <property type="match status" value="1"/>
</dbReference>
<dbReference type="SUPFAM" id="SSF46689">
    <property type="entry name" value="Homeodomain-like"/>
    <property type="match status" value="1"/>
</dbReference>
<dbReference type="PROSITE" id="PS00027">
    <property type="entry name" value="HOMEOBOX_1"/>
    <property type="match status" value="1"/>
</dbReference>
<dbReference type="PROSITE" id="PS50071">
    <property type="entry name" value="HOMEOBOX_2"/>
    <property type="match status" value="1"/>
</dbReference>
<organism>
    <name type="scientific">Anopheles gambiae</name>
    <name type="common">African malaria mosquito</name>
    <dbReference type="NCBI Taxonomy" id="7165"/>
    <lineage>
        <taxon>Eukaryota</taxon>
        <taxon>Metazoa</taxon>
        <taxon>Ecdysozoa</taxon>
        <taxon>Arthropoda</taxon>
        <taxon>Hexapoda</taxon>
        <taxon>Insecta</taxon>
        <taxon>Pterygota</taxon>
        <taxon>Neoptera</taxon>
        <taxon>Endopterygota</taxon>
        <taxon>Diptera</taxon>
        <taxon>Nematocera</taxon>
        <taxon>Culicoidea</taxon>
        <taxon>Culicidae</taxon>
        <taxon>Anophelinae</taxon>
        <taxon>Anopheles</taxon>
    </lineage>
</organism>
<keyword id="KW-0217">Developmental protein</keyword>
<keyword id="KW-0238">DNA-binding</keyword>
<keyword id="KW-0371">Homeobox</keyword>
<keyword id="KW-0539">Nucleus</keyword>
<keyword id="KW-1185">Reference proteome</keyword>
<reference evidence="5" key="1">
    <citation type="journal article" date="2000" name="Evol. Dev.">
        <title>Characterization of the Hox gene cluster in the malaria vector mosquito, Anopheles gambiae.</title>
        <authorList>
            <person name="Devenport M.P."/>
            <person name="Blass C."/>
            <person name="Eggleston P."/>
        </authorList>
    </citation>
    <scope>NUCLEOTIDE SEQUENCE [MRNA]</scope>
    <source>
        <strain evidence="5">G3</strain>
    </source>
</reference>
<reference key="2">
    <citation type="journal article" date="2002" name="Science">
        <title>The genome sequence of the malaria mosquito Anopheles gambiae.</title>
        <authorList>
            <person name="Holt R.A."/>
            <person name="Subramanian G.M."/>
            <person name="Halpern A."/>
            <person name="Sutton G.G."/>
            <person name="Charlab R."/>
            <person name="Nusskern D.R."/>
            <person name="Wincker P."/>
            <person name="Clark A.G."/>
            <person name="Ribeiro J.M.C."/>
            <person name="Wides R."/>
            <person name="Salzberg S.L."/>
            <person name="Loftus B.J."/>
            <person name="Yandell M.D."/>
            <person name="Majoros W.H."/>
            <person name="Rusch D.B."/>
            <person name="Lai Z."/>
            <person name="Kraft C.L."/>
            <person name="Abril J.F."/>
            <person name="Anthouard V."/>
            <person name="Arensburger P."/>
            <person name="Atkinson P.W."/>
            <person name="Baden H."/>
            <person name="de Berardinis V."/>
            <person name="Baldwin D."/>
            <person name="Benes V."/>
            <person name="Biedler J."/>
            <person name="Blass C."/>
            <person name="Bolanos R."/>
            <person name="Boscus D."/>
            <person name="Barnstead M."/>
            <person name="Cai S."/>
            <person name="Center A."/>
            <person name="Chaturverdi K."/>
            <person name="Christophides G.K."/>
            <person name="Chrystal M.A.M."/>
            <person name="Clamp M."/>
            <person name="Cravchik A."/>
            <person name="Curwen V."/>
            <person name="Dana A."/>
            <person name="Delcher A."/>
            <person name="Dew I."/>
            <person name="Evans C.A."/>
            <person name="Flanigan M."/>
            <person name="Grundschober-Freimoser A."/>
            <person name="Friedli L."/>
            <person name="Gu Z."/>
            <person name="Guan P."/>
            <person name="Guigo R."/>
            <person name="Hillenmeyer M.E."/>
            <person name="Hladun S.L."/>
            <person name="Hogan J.R."/>
            <person name="Hong Y.S."/>
            <person name="Hoover J."/>
            <person name="Jaillon O."/>
            <person name="Ke Z."/>
            <person name="Kodira C.D."/>
            <person name="Kokoza E."/>
            <person name="Koutsos A."/>
            <person name="Letunic I."/>
            <person name="Levitsky A.A."/>
            <person name="Liang Y."/>
            <person name="Lin J.-J."/>
            <person name="Lobo N.F."/>
            <person name="Lopez J.R."/>
            <person name="Malek J.A."/>
            <person name="McIntosh T.C."/>
            <person name="Meister S."/>
            <person name="Miller J.R."/>
            <person name="Mobarry C."/>
            <person name="Mongin E."/>
            <person name="Murphy S.D."/>
            <person name="O'Brochta D.A."/>
            <person name="Pfannkoch C."/>
            <person name="Qi R."/>
            <person name="Regier M.A."/>
            <person name="Remington K."/>
            <person name="Shao H."/>
            <person name="Sharakhova M.V."/>
            <person name="Sitter C.D."/>
            <person name="Shetty J."/>
            <person name="Smith T.J."/>
            <person name="Strong R."/>
            <person name="Sun J."/>
            <person name="Thomasova D."/>
            <person name="Ton L.Q."/>
            <person name="Topalis P."/>
            <person name="Tu Z.J."/>
            <person name="Unger M.F."/>
            <person name="Walenz B."/>
            <person name="Wang A.H."/>
            <person name="Wang J."/>
            <person name="Wang M."/>
            <person name="Wang X."/>
            <person name="Woodford K.J."/>
            <person name="Wortman J.R."/>
            <person name="Wu M."/>
            <person name="Yao A."/>
            <person name="Zdobnov E.M."/>
            <person name="Zhang H."/>
            <person name="Zhao Q."/>
            <person name="Zhao S."/>
            <person name="Zhu S.C."/>
            <person name="Zhimulev I."/>
            <person name="Coluzzi M."/>
            <person name="della Torre A."/>
            <person name="Roth C.W."/>
            <person name="Louis C."/>
            <person name="Kalush F."/>
            <person name="Mural R.J."/>
            <person name="Myers E.W."/>
            <person name="Adams M.D."/>
            <person name="Smith H.O."/>
            <person name="Broder S."/>
            <person name="Gardner M.J."/>
            <person name="Fraser C.M."/>
            <person name="Birney E."/>
            <person name="Bork P."/>
            <person name="Brey P.T."/>
            <person name="Venter J.C."/>
            <person name="Weissenbach J."/>
            <person name="Kafatos F.C."/>
            <person name="Collins F.H."/>
            <person name="Hoffman S.L."/>
        </authorList>
    </citation>
    <scope>NUCLEOTIDE SEQUENCE [LARGE SCALE GENOMIC DNA]</scope>
    <source>
        <strain>PEST</strain>
    </source>
</reference>
<comment type="function">
    <text evidence="4">Sequence-specific transcription factor which is part of a developmental regulatory system that provides cells with specific positional identities on the anterior-posterior axis.</text>
</comment>
<comment type="subcellular location">
    <subcellularLocation>
        <location evidence="2">Nucleus</location>
    </subcellularLocation>
</comment>
<comment type="similarity">
    <text evidence="1">Belongs to the Antp homeobox family.</text>
</comment>
<name>ABDA_ANOGA</name>
<accession>O76762</accession>
<accession>Q7PRF9</accession>
<feature type="chain" id="PRO_0000343523" description="Homeobox protein abdominal-A homolog">
    <location>
        <begin position="1"/>
        <end position="308"/>
    </location>
</feature>
<feature type="DNA-binding region" description="Homeobox" evidence="2">
    <location>
        <begin position="138"/>
        <end position="197"/>
    </location>
</feature>
<feature type="region of interest" description="Disordered" evidence="3">
    <location>
        <begin position="207"/>
        <end position="277"/>
    </location>
</feature>
<feature type="compositionally biased region" description="Basic and acidic residues" evidence="3">
    <location>
        <begin position="207"/>
        <end position="221"/>
    </location>
</feature>
<feature type="compositionally biased region" description="Low complexity" evidence="3">
    <location>
        <begin position="223"/>
        <end position="247"/>
    </location>
</feature>
<feature type="compositionally biased region" description="Gly residues" evidence="3">
    <location>
        <begin position="248"/>
        <end position="269"/>
    </location>
</feature>
<sequence>MYPFVSNHPTTHTSYSTMPGFSGLDDKSCSSRYTDSVMNSYPPMGVPGSASIAQFYQQAAAVSAASAGVGVDSLGSACSQLSSSVGGAQSGLPDITRHPWLVTASQSALQKFASTDWMSNPFDRVVCGDFAGPNGCPRRRGRQTYTRFQTLELEKEFHFNHYLTRRRRIEIAHALCLTERQIKIWFQNRRMKLKKELRAVKEINEQARREREEQDKMKNESLKSAQQHHSQKQAQQEHTVVGSQQTSNGGGTGGGTGGSGGAGSGGSSGNLGSHLHHPSIVSQNDLKLGLGGMGVGVGGNLSMMGAQT</sequence>
<gene>
    <name evidence="5" type="primary">abd-A</name>
    <name type="ORF">AGAP004662</name>
</gene>
<proteinExistence type="evidence at transcript level"/>
<evidence type="ECO:0000255" key="1"/>
<evidence type="ECO:0000255" key="2">
    <source>
        <dbReference type="PROSITE-ProRule" id="PRU00108"/>
    </source>
</evidence>
<evidence type="ECO:0000256" key="3">
    <source>
        <dbReference type="SAM" id="MobiDB-lite"/>
    </source>
</evidence>
<evidence type="ECO:0000305" key="4"/>
<evidence type="ECO:0000312" key="5">
    <source>
        <dbReference type="EMBL" id="AAC31946.1"/>
    </source>
</evidence>